<evidence type="ECO:0000255" key="1">
    <source>
        <dbReference type="HAMAP-Rule" id="MF_00298"/>
    </source>
</evidence>
<sequence>MSKHKGPTGAMVDPESLPYRPCVGLMVLNKAGLVWAGRRIVIPGDEMDGATQLWQMPQGGIDKGEDPAQAALRELYEETGMTSVSLLEEASDWINYDLPPHLVGLALKGKYRGQTQKWFAYRFEGDESEIAINPPPGGHTAEFDCWEWKPMADLPNLIVPFKRKVYEQVVATFRHLAA</sequence>
<accession>A9M874</accession>
<dbReference type="EC" id="3.6.1.-" evidence="1"/>
<dbReference type="EMBL" id="CP000872">
    <property type="protein sequence ID" value="ABX62872.1"/>
    <property type="molecule type" value="Genomic_DNA"/>
</dbReference>
<dbReference type="RefSeq" id="WP_004688740.1">
    <property type="nucleotide sequence ID" value="NC_010103.1"/>
</dbReference>
<dbReference type="SMR" id="A9M874"/>
<dbReference type="KEGG" id="bcs:BCAN_A1874"/>
<dbReference type="HOGENOM" id="CLU_087195_3_0_5"/>
<dbReference type="PhylomeDB" id="A9M874"/>
<dbReference type="Proteomes" id="UP000001385">
    <property type="component" value="Chromosome I"/>
</dbReference>
<dbReference type="GO" id="GO:0034432">
    <property type="term" value="F:bis(5'-adenosyl)-pentaphosphatase activity"/>
    <property type="evidence" value="ECO:0007669"/>
    <property type="project" value="TreeGrafter"/>
</dbReference>
<dbReference type="GO" id="GO:0008893">
    <property type="term" value="F:guanosine-3',5'-bis(diphosphate) 3'-diphosphatase activity"/>
    <property type="evidence" value="ECO:0007669"/>
    <property type="project" value="TreeGrafter"/>
</dbReference>
<dbReference type="GO" id="GO:0006753">
    <property type="term" value="P:nucleoside phosphate metabolic process"/>
    <property type="evidence" value="ECO:0007669"/>
    <property type="project" value="TreeGrafter"/>
</dbReference>
<dbReference type="GO" id="GO:0019693">
    <property type="term" value="P:ribose phosphate metabolic process"/>
    <property type="evidence" value="ECO:0007669"/>
    <property type="project" value="TreeGrafter"/>
</dbReference>
<dbReference type="CDD" id="cd03671">
    <property type="entry name" value="NUDIX_Ap4A_hydrolase_plant_like"/>
    <property type="match status" value="1"/>
</dbReference>
<dbReference type="Gene3D" id="3.90.79.10">
    <property type="entry name" value="Nucleoside Triphosphate Pyrophosphohydrolase"/>
    <property type="match status" value="1"/>
</dbReference>
<dbReference type="HAMAP" id="MF_00298">
    <property type="entry name" value="Nudix_RppH"/>
    <property type="match status" value="1"/>
</dbReference>
<dbReference type="InterPro" id="IPR020476">
    <property type="entry name" value="Nudix_hydrolase"/>
</dbReference>
<dbReference type="InterPro" id="IPR015797">
    <property type="entry name" value="NUDIX_hydrolase-like_dom_sf"/>
</dbReference>
<dbReference type="InterPro" id="IPR020084">
    <property type="entry name" value="NUDIX_hydrolase_CS"/>
</dbReference>
<dbReference type="InterPro" id="IPR000086">
    <property type="entry name" value="NUDIX_hydrolase_dom"/>
</dbReference>
<dbReference type="InterPro" id="IPR022927">
    <property type="entry name" value="RppH"/>
</dbReference>
<dbReference type="NCBIfam" id="NF001938">
    <property type="entry name" value="PRK00714.1-5"/>
    <property type="match status" value="1"/>
</dbReference>
<dbReference type="PANTHER" id="PTHR11839:SF22">
    <property type="entry name" value="NUDIX HYDROLASE 26, CHLOROPLASTIC"/>
    <property type="match status" value="1"/>
</dbReference>
<dbReference type="PANTHER" id="PTHR11839">
    <property type="entry name" value="UDP/ADP-SUGAR PYROPHOSPHATASE"/>
    <property type="match status" value="1"/>
</dbReference>
<dbReference type="Pfam" id="PF00293">
    <property type="entry name" value="NUDIX"/>
    <property type="match status" value="1"/>
</dbReference>
<dbReference type="PRINTS" id="PR00502">
    <property type="entry name" value="NUDIXFAMILY"/>
</dbReference>
<dbReference type="SUPFAM" id="SSF55811">
    <property type="entry name" value="Nudix"/>
    <property type="match status" value="1"/>
</dbReference>
<dbReference type="PROSITE" id="PS51462">
    <property type="entry name" value="NUDIX"/>
    <property type="match status" value="1"/>
</dbReference>
<dbReference type="PROSITE" id="PS00893">
    <property type="entry name" value="NUDIX_BOX"/>
    <property type="match status" value="1"/>
</dbReference>
<protein>
    <recommendedName>
        <fullName evidence="1">RNA pyrophosphohydrolase</fullName>
        <ecNumber evidence="1">3.6.1.-</ecNumber>
    </recommendedName>
    <alternativeName>
        <fullName evidence="1">(Di)nucleoside polyphosphate hydrolase</fullName>
    </alternativeName>
</protein>
<proteinExistence type="inferred from homology"/>
<feature type="chain" id="PRO_1000078953" description="RNA pyrophosphohydrolase">
    <location>
        <begin position="1"/>
        <end position="178"/>
    </location>
</feature>
<feature type="domain" description="Nudix hydrolase" evidence="1">
    <location>
        <begin position="18"/>
        <end position="171"/>
    </location>
</feature>
<feature type="short sequence motif" description="Nudix box">
    <location>
        <begin position="59"/>
        <end position="80"/>
    </location>
</feature>
<reference key="1">
    <citation type="submission" date="2007-10" db="EMBL/GenBank/DDBJ databases">
        <title>Brucella canis ATCC 23365 whole genome shotgun sequencing project.</title>
        <authorList>
            <person name="Setubal J.C."/>
            <person name="Bowns C."/>
            <person name="Boyle S."/>
            <person name="Crasta O.R."/>
            <person name="Czar M.J."/>
            <person name="Dharmanolla C."/>
            <person name="Gillespie J.J."/>
            <person name="Kenyon R.W."/>
            <person name="Lu J."/>
            <person name="Mane S."/>
            <person name="Mohapatra S."/>
            <person name="Nagrani S."/>
            <person name="Purkayastha A."/>
            <person name="Rajasimha H.K."/>
            <person name="Shallom J.M."/>
            <person name="Shallom S."/>
            <person name="Shukla M."/>
            <person name="Snyder E.E."/>
            <person name="Sobral B.W."/>
            <person name="Wattam A.R."/>
            <person name="Will R."/>
            <person name="Williams K."/>
            <person name="Yoo H."/>
            <person name="Bruce D."/>
            <person name="Detter C."/>
            <person name="Munk C."/>
            <person name="Brettin T.S."/>
        </authorList>
    </citation>
    <scope>NUCLEOTIDE SEQUENCE [LARGE SCALE GENOMIC DNA]</scope>
    <source>
        <strain>ATCC 23365 / NCTC 10854 / RM-666</strain>
    </source>
</reference>
<organism>
    <name type="scientific">Brucella canis (strain ATCC 23365 / NCTC 10854 / RM-666)</name>
    <dbReference type="NCBI Taxonomy" id="483179"/>
    <lineage>
        <taxon>Bacteria</taxon>
        <taxon>Pseudomonadati</taxon>
        <taxon>Pseudomonadota</taxon>
        <taxon>Alphaproteobacteria</taxon>
        <taxon>Hyphomicrobiales</taxon>
        <taxon>Brucellaceae</taxon>
        <taxon>Brucella/Ochrobactrum group</taxon>
        <taxon>Brucella</taxon>
    </lineage>
</organism>
<name>RPPH_BRUC2</name>
<comment type="function">
    <text evidence="1">Accelerates the degradation of transcripts by removing pyrophosphate from the 5'-end of triphosphorylated RNA, leading to a more labile monophosphorylated state that can stimulate subsequent ribonuclease cleavage.</text>
</comment>
<comment type="cofactor">
    <cofactor evidence="1">
        <name>a divalent metal cation</name>
        <dbReference type="ChEBI" id="CHEBI:60240"/>
    </cofactor>
</comment>
<comment type="similarity">
    <text evidence="1">Belongs to the Nudix hydrolase family. RppH subfamily.</text>
</comment>
<keyword id="KW-0378">Hydrolase</keyword>
<keyword id="KW-1185">Reference proteome</keyword>
<gene>
    <name evidence="1" type="primary">rppH</name>
    <name evidence="1" type="synonym">nudH</name>
    <name type="ordered locus">BCAN_A1874</name>
</gene>